<gene>
    <name type="primary">marC</name>
    <name type="ordered locus">SF1565</name>
    <name type="ordered locus">S1692</name>
</gene>
<name>MARC_SHIFL</name>
<organism>
    <name type="scientific">Shigella flexneri</name>
    <dbReference type="NCBI Taxonomy" id="623"/>
    <lineage>
        <taxon>Bacteria</taxon>
        <taxon>Pseudomonadati</taxon>
        <taxon>Pseudomonadota</taxon>
        <taxon>Gammaproteobacteria</taxon>
        <taxon>Enterobacterales</taxon>
        <taxon>Enterobacteriaceae</taxon>
        <taxon>Shigella</taxon>
    </lineage>
</organism>
<keyword id="KW-0997">Cell inner membrane</keyword>
<keyword id="KW-1003">Cell membrane</keyword>
<keyword id="KW-0472">Membrane</keyword>
<keyword id="KW-1185">Reference proteome</keyword>
<keyword id="KW-0812">Transmembrane</keyword>
<keyword id="KW-1133">Transmembrane helix</keyword>
<evidence type="ECO:0000250" key="1"/>
<evidence type="ECO:0000255" key="2"/>
<evidence type="ECO:0000305" key="3"/>
<proteinExistence type="inferred from homology"/>
<comment type="subcellular location">
    <subcellularLocation>
        <location evidence="1">Cell inner membrane</location>
        <topology evidence="1">Multi-pass membrane protein</topology>
    </subcellularLocation>
</comment>
<comment type="similarity">
    <text evidence="3">Belongs to the UPF0056 (MarC) family.</text>
</comment>
<sequence>MLDLFKAIGLGLVVLLPLANPLTTVALFLGLAGNMNSAERNRQSLMASVYVFAIMMVAYYAGQLVMDTFGISIPGLRIAGGLIVAFIGFRMLFPQQKAIDSPEAKSKSEELEDEPSANIAFVPLAMPSTAGPGTIAMIISSASTVRQSSTFADWVLMVAPPLIFFLVAVILWGSLRSSGAIMRLVGKGGIEAISRLMGFLLVCMGVQFIINGILEIIKTYH</sequence>
<feature type="chain" id="PRO_0000156900" description="UPF0056 inner membrane protein MarC">
    <location>
        <begin position="1"/>
        <end position="221"/>
    </location>
</feature>
<feature type="topological domain" description="Periplasmic" evidence="2">
    <location>
        <begin position="1"/>
        <end position="7"/>
    </location>
</feature>
<feature type="transmembrane region" description="Helical" evidence="2">
    <location>
        <begin position="8"/>
        <end position="28"/>
    </location>
</feature>
<feature type="topological domain" description="Cytoplasmic" evidence="2">
    <location>
        <begin position="29"/>
        <end position="44"/>
    </location>
</feature>
<feature type="transmembrane region" description="Helical" evidence="2">
    <location>
        <begin position="45"/>
        <end position="65"/>
    </location>
</feature>
<feature type="topological domain" description="Periplasmic" evidence="2">
    <location>
        <begin position="66"/>
        <end position="68"/>
    </location>
</feature>
<feature type="transmembrane region" description="Helical" evidence="2">
    <location>
        <begin position="69"/>
        <end position="89"/>
    </location>
</feature>
<feature type="topological domain" description="Cytoplasmic" evidence="2">
    <location>
        <begin position="90"/>
        <end position="118"/>
    </location>
</feature>
<feature type="transmembrane region" description="Helical" evidence="2">
    <location>
        <begin position="119"/>
        <end position="139"/>
    </location>
</feature>
<feature type="topological domain" description="Periplasmic" evidence="2">
    <location>
        <begin position="140"/>
        <end position="154"/>
    </location>
</feature>
<feature type="transmembrane region" description="Helical" evidence="2">
    <location>
        <begin position="155"/>
        <end position="175"/>
    </location>
</feature>
<feature type="topological domain" description="Cytoplasmic" evidence="2">
    <location>
        <begin position="176"/>
        <end position="196"/>
    </location>
</feature>
<feature type="transmembrane region" description="Helical" evidence="2">
    <location>
        <begin position="197"/>
        <end position="217"/>
    </location>
</feature>
<feature type="topological domain" description="Periplasmic" evidence="2">
    <location>
        <begin position="218"/>
        <end position="221"/>
    </location>
</feature>
<reference key="1">
    <citation type="journal article" date="2002" name="Nucleic Acids Res.">
        <title>Genome sequence of Shigella flexneri 2a: insights into pathogenicity through comparison with genomes of Escherichia coli K12 and O157.</title>
        <authorList>
            <person name="Jin Q."/>
            <person name="Yuan Z."/>
            <person name="Xu J."/>
            <person name="Wang Y."/>
            <person name="Shen Y."/>
            <person name="Lu W."/>
            <person name="Wang J."/>
            <person name="Liu H."/>
            <person name="Yang J."/>
            <person name="Yang F."/>
            <person name="Zhang X."/>
            <person name="Zhang J."/>
            <person name="Yang G."/>
            <person name="Wu H."/>
            <person name="Qu D."/>
            <person name="Dong J."/>
            <person name="Sun L."/>
            <person name="Xue Y."/>
            <person name="Zhao A."/>
            <person name="Gao Y."/>
            <person name="Zhu J."/>
            <person name="Kan B."/>
            <person name="Ding K."/>
            <person name="Chen S."/>
            <person name="Cheng H."/>
            <person name="Yao Z."/>
            <person name="He B."/>
            <person name="Chen R."/>
            <person name="Ma D."/>
            <person name="Qiang B."/>
            <person name="Wen Y."/>
            <person name="Hou Y."/>
            <person name="Yu J."/>
        </authorList>
    </citation>
    <scope>NUCLEOTIDE SEQUENCE [LARGE SCALE GENOMIC DNA]</scope>
    <source>
        <strain>301 / Serotype 2a</strain>
    </source>
</reference>
<reference key="2">
    <citation type="journal article" date="2003" name="Infect. Immun.">
        <title>Complete genome sequence and comparative genomics of Shigella flexneri serotype 2a strain 2457T.</title>
        <authorList>
            <person name="Wei J."/>
            <person name="Goldberg M.B."/>
            <person name="Burland V."/>
            <person name="Venkatesan M.M."/>
            <person name="Deng W."/>
            <person name="Fournier G."/>
            <person name="Mayhew G.F."/>
            <person name="Plunkett G. III"/>
            <person name="Rose D.J."/>
            <person name="Darling A."/>
            <person name="Mau B."/>
            <person name="Perna N.T."/>
            <person name="Payne S.M."/>
            <person name="Runyen-Janecky L.J."/>
            <person name="Zhou S."/>
            <person name="Schwartz D.C."/>
            <person name="Blattner F.R."/>
        </authorList>
    </citation>
    <scope>NUCLEOTIDE SEQUENCE [LARGE SCALE GENOMIC DNA]</scope>
    <source>
        <strain>ATCC 700930 / 2457T / Serotype 2a</strain>
    </source>
</reference>
<protein>
    <recommendedName>
        <fullName>UPF0056 inner membrane protein MarC</fullName>
    </recommendedName>
</protein>
<dbReference type="EMBL" id="AE005674">
    <property type="protein sequence ID" value="AAN43154.1"/>
    <property type="molecule type" value="Genomic_DNA"/>
</dbReference>
<dbReference type="EMBL" id="AE014073">
    <property type="protein sequence ID" value="AAP17048.1"/>
    <property type="molecule type" value="Genomic_DNA"/>
</dbReference>
<dbReference type="RefSeq" id="WP_000885033.1">
    <property type="nucleotide sequence ID" value="NZ_WPGW01000096.1"/>
</dbReference>
<dbReference type="STRING" id="198214.SF1565"/>
<dbReference type="PaxDb" id="198214-SF1565"/>
<dbReference type="GeneID" id="93775693"/>
<dbReference type="KEGG" id="sfl:SF1565"/>
<dbReference type="KEGG" id="sfx:S1692"/>
<dbReference type="PATRIC" id="fig|198214.7.peg.1850"/>
<dbReference type="HOGENOM" id="CLU_079909_2_0_6"/>
<dbReference type="Proteomes" id="UP000001006">
    <property type="component" value="Chromosome"/>
</dbReference>
<dbReference type="Proteomes" id="UP000002673">
    <property type="component" value="Chromosome"/>
</dbReference>
<dbReference type="GO" id="GO:0005886">
    <property type="term" value="C:plasma membrane"/>
    <property type="evidence" value="ECO:0007669"/>
    <property type="project" value="UniProtKB-SubCell"/>
</dbReference>
<dbReference type="InterPro" id="IPR002771">
    <property type="entry name" value="Multi_antbiot-R_MarC"/>
</dbReference>
<dbReference type="NCBIfam" id="TIGR00427">
    <property type="entry name" value="NAAT family transporter"/>
    <property type="match status" value="1"/>
</dbReference>
<dbReference type="NCBIfam" id="NF008228">
    <property type="entry name" value="PRK10995.1"/>
    <property type="match status" value="1"/>
</dbReference>
<dbReference type="PANTHER" id="PTHR33508:SF2">
    <property type="entry name" value="UPF0056 INNER MEMBRANE PROTEIN MARC"/>
    <property type="match status" value="1"/>
</dbReference>
<dbReference type="PANTHER" id="PTHR33508">
    <property type="entry name" value="UPF0056 MEMBRANE PROTEIN YHCE"/>
    <property type="match status" value="1"/>
</dbReference>
<dbReference type="Pfam" id="PF01914">
    <property type="entry name" value="MarC"/>
    <property type="match status" value="1"/>
</dbReference>
<accession>P0AEY2</accession>
<accession>P31123</accession>
<accession>P31124</accession>
<accession>P77753</accession>